<feature type="chain" id="PRO_1000020188" description="Methionyl-tRNA formyltransferase">
    <location>
        <begin position="1"/>
        <end position="322"/>
    </location>
</feature>
<feature type="binding site" evidence="1">
    <location>
        <begin position="112"/>
        <end position="115"/>
    </location>
    <ligand>
        <name>(6S)-5,6,7,8-tetrahydrofolate</name>
        <dbReference type="ChEBI" id="CHEBI:57453"/>
    </ligand>
</feature>
<sequence>MRVVFFGTPEFALPSLQILLQPQSPFEVVGLVCQPDRPQGRGQKVLPPPTKVLAQAHGIPVWQPVRLRRDPQVLAALEALAADVFVVVAYGQILPLTVLQMPKLGCVNVHGSLLPAYRGAAPIQWAIANGETETGVTTMLMDEGMDTGAILLQAKLPIGPEQTSLELAPQLAQLGAELLVETLLKLEKGELTPIPQDGSRATYAPLLKKQDFHLDWQRPAQALHNQIRAFSPNCFTGIEGQRIKIVRSASPQLHSPPPEIPQGSPGEVVGLARGEGIYVATGEGSLLIRRAQLPGKKEQSAWDLVNGGQLKVGMRFEPLPNS</sequence>
<keyword id="KW-0648">Protein biosynthesis</keyword>
<keyword id="KW-1185">Reference proteome</keyword>
<keyword id="KW-0808">Transferase</keyword>
<organism>
    <name type="scientific">Synechococcus sp. (strain JA-2-3B'a(2-13))</name>
    <name type="common">Cyanobacteria bacterium Yellowstone B-Prime</name>
    <dbReference type="NCBI Taxonomy" id="321332"/>
    <lineage>
        <taxon>Bacteria</taxon>
        <taxon>Bacillati</taxon>
        <taxon>Cyanobacteriota</taxon>
        <taxon>Cyanophyceae</taxon>
        <taxon>Synechococcales</taxon>
        <taxon>Synechococcaceae</taxon>
        <taxon>Synechococcus</taxon>
    </lineage>
</organism>
<protein>
    <recommendedName>
        <fullName evidence="1">Methionyl-tRNA formyltransferase</fullName>
        <ecNumber evidence="1">2.1.2.9</ecNumber>
    </recommendedName>
</protein>
<gene>
    <name evidence="1" type="primary">fmt</name>
    <name type="ordered locus">CYB_1993</name>
</gene>
<evidence type="ECO:0000255" key="1">
    <source>
        <dbReference type="HAMAP-Rule" id="MF_00182"/>
    </source>
</evidence>
<comment type="function">
    <text evidence="1">Attaches a formyl group to the free amino group of methionyl-tRNA(fMet). The formyl group appears to play a dual role in the initiator identity of N-formylmethionyl-tRNA by promoting its recognition by IF2 and preventing the misappropriation of this tRNA by the elongation apparatus.</text>
</comment>
<comment type="catalytic activity">
    <reaction evidence="1">
        <text>L-methionyl-tRNA(fMet) + (6R)-10-formyltetrahydrofolate = N-formyl-L-methionyl-tRNA(fMet) + (6S)-5,6,7,8-tetrahydrofolate + H(+)</text>
        <dbReference type="Rhea" id="RHEA:24380"/>
        <dbReference type="Rhea" id="RHEA-COMP:9952"/>
        <dbReference type="Rhea" id="RHEA-COMP:9953"/>
        <dbReference type="ChEBI" id="CHEBI:15378"/>
        <dbReference type="ChEBI" id="CHEBI:57453"/>
        <dbReference type="ChEBI" id="CHEBI:78530"/>
        <dbReference type="ChEBI" id="CHEBI:78844"/>
        <dbReference type="ChEBI" id="CHEBI:195366"/>
        <dbReference type="EC" id="2.1.2.9"/>
    </reaction>
</comment>
<comment type="similarity">
    <text evidence="1">Belongs to the Fmt family.</text>
</comment>
<reference key="1">
    <citation type="journal article" date="2007" name="ISME J.">
        <title>Population level functional diversity in a microbial community revealed by comparative genomic and metagenomic analyses.</title>
        <authorList>
            <person name="Bhaya D."/>
            <person name="Grossman A.R."/>
            <person name="Steunou A.-S."/>
            <person name="Khuri N."/>
            <person name="Cohan F.M."/>
            <person name="Hamamura N."/>
            <person name="Melendrez M.C."/>
            <person name="Bateson M.M."/>
            <person name="Ward D.M."/>
            <person name="Heidelberg J.F."/>
        </authorList>
    </citation>
    <scope>NUCLEOTIDE SEQUENCE [LARGE SCALE GENOMIC DNA]</scope>
    <source>
        <strain>JA-2-3B'a(2-13)</strain>
    </source>
</reference>
<name>FMT_SYNJB</name>
<proteinExistence type="inferred from homology"/>
<dbReference type="EC" id="2.1.2.9" evidence="1"/>
<dbReference type="EMBL" id="CP000240">
    <property type="protein sequence ID" value="ABD02941.1"/>
    <property type="molecule type" value="Genomic_DNA"/>
</dbReference>
<dbReference type="RefSeq" id="WP_011433580.1">
    <property type="nucleotide sequence ID" value="NC_007776.1"/>
</dbReference>
<dbReference type="SMR" id="Q2JK54"/>
<dbReference type="STRING" id="321332.CYB_1993"/>
<dbReference type="KEGG" id="cyb:CYB_1993"/>
<dbReference type="eggNOG" id="COG0223">
    <property type="taxonomic scope" value="Bacteria"/>
</dbReference>
<dbReference type="HOGENOM" id="CLU_033347_1_1_3"/>
<dbReference type="OrthoDB" id="9802815at2"/>
<dbReference type="Proteomes" id="UP000001938">
    <property type="component" value="Chromosome"/>
</dbReference>
<dbReference type="GO" id="GO:0005829">
    <property type="term" value="C:cytosol"/>
    <property type="evidence" value="ECO:0007669"/>
    <property type="project" value="TreeGrafter"/>
</dbReference>
<dbReference type="GO" id="GO:0004479">
    <property type="term" value="F:methionyl-tRNA formyltransferase activity"/>
    <property type="evidence" value="ECO:0007669"/>
    <property type="project" value="UniProtKB-UniRule"/>
</dbReference>
<dbReference type="CDD" id="cd08646">
    <property type="entry name" value="FMT_core_Met-tRNA-FMT_N"/>
    <property type="match status" value="1"/>
</dbReference>
<dbReference type="CDD" id="cd08704">
    <property type="entry name" value="Met_tRNA_FMT_C"/>
    <property type="match status" value="1"/>
</dbReference>
<dbReference type="FunFam" id="3.40.50.12230:FF:000001">
    <property type="entry name" value="Methionyl-tRNA formyltransferase"/>
    <property type="match status" value="1"/>
</dbReference>
<dbReference type="Gene3D" id="3.40.50.12230">
    <property type="match status" value="1"/>
</dbReference>
<dbReference type="HAMAP" id="MF_00182">
    <property type="entry name" value="Formyl_trans"/>
    <property type="match status" value="1"/>
</dbReference>
<dbReference type="InterPro" id="IPR005794">
    <property type="entry name" value="Fmt"/>
</dbReference>
<dbReference type="InterPro" id="IPR005793">
    <property type="entry name" value="Formyl_trans_C"/>
</dbReference>
<dbReference type="InterPro" id="IPR002376">
    <property type="entry name" value="Formyl_transf_N"/>
</dbReference>
<dbReference type="InterPro" id="IPR036477">
    <property type="entry name" value="Formyl_transf_N_sf"/>
</dbReference>
<dbReference type="InterPro" id="IPR011034">
    <property type="entry name" value="Formyl_transferase-like_C_sf"/>
</dbReference>
<dbReference type="InterPro" id="IPR001555">
    <property type="entry name" value="GART_AS"/>
</dbReference>
<dbReference type="InterPro" id="IPR044135">
    <property type="entry name" value="Met-tRNA-FMT_C"/>
</dbReference>
<dbReference type="InterPro" id="IPR041711">
    <property type="entry name" value="Met-tRNA-FMT_N"/>
</dbReference>
<dbReference type="NCBIfam" id="TIGR00460">
    <property type="entry name" value="fmt"/>
    <property type="match status" value="1"/>
</dbReference>
<dbReference type="PANTHER" id="PTHR11138">
    <property type="entry name" value="METHIONYL-TRNA FORMYLTRANSFERASE"/>
    <property type="match status" value="1"/>
</dbReference>
<dbReference type="PANTHER" id="PTHR11138:SF5">
    <property type="entry name" value="METHIONYL-TRNA FORMYLTRANSFERASE, MITOCHONDRIAL"/>
    <property type="match status" value="1"/>
</dbReference>
<dbReference type="Pfam" id="PF02911">
    <property type="entry name" value="Formyl_trans_C"/>
    <property type="match status" value="1"/>
</dbReference>
<dbReference type="Pfam" id="PF00551">
    <property type="entry name" value="Formyl_trans_N"/>
    <property type="match status" value="1"/>
</dbReference>
<dbReference type="SUPFAM" id="SSF50486">
    <property type="entry name" value="FMT C-terminal domain-like"/>
    <property type="match status" value="1"/>
</dbReference>
<dbReference type="SUPFAM" id="SSF53328">
    <property type="entry name" value="Formyltransferase"/>
    <property type="match status" value="1"/>
</dbReference>
<dbReference type="PROSITE" id="PS00373">
    <property type="entry name" value="GART"/>
    <property type="match status" value="1"/>
</dbReference>
<accession>Q2JK54</accession>